<comment type="function">
    <text evidence="1">An essential GTPase which binds GTP, GDP and possibly (p)ppGpp with moderate affinity, with high nucleotide exchange rates and a fairly low GTP hydrolysis rate. Plays a role in control of the cell cycle, stress response, ribosome biogenesis and in those bacteria that undergo differentiation, in morphogenesis control.</text>
</comment>
<comment type="cofactor">
    <cofactor evidence="1">
        <name>Mg(2+)</name>
        <dbReference type="ChEBI" id="CHEBI:18420"/>
    </cofactor>
</comment>
<comment type="subunit">
    <text evidence="1">Monomer.</text>
</comment>
<comment type="subcellular location">
    <subcellularLocation>
        <location evidence="1">Cytoplasm</location>
    </subcellularLocation>
</comment>
<comment type="similarity">
    <text evidence="1">Belongs to the TRAFAC class OBG-HflX-like GTPase superfamily. OBG GTPase family.</text>
</comment>
<organism>
    <name type="scientific">Leptospira biflexa serovar Patoc (strain Patoc 1 / Ames)</name>
    <dbReference type="NCBI Taxonomy" id="355278"/>
    <lineage>
        <taxon>Bacteria</taxon>
        <taxon>Pseudomonadati</taxon>
        <taxon>Spirochaetota</taxon>
        <taxon>Spirochaetia</taxon>
        <taxon>Leptospirales</taxon>
        <taxon>Leptospiraceae</taxon>
        <taxon>Leptospira</taxon>
    </lineage>
</organism>
<gene>
    <name evidence="1" type="primary">obg</name>
    <name type="ordered locus">LBF_1723</name>
</gene>
<feature type="chain" id="PRO_0000386013" description="GTPase Obg">
    <location>
        <begin position="1"/>
        <end position="341"/>
    </location>
</feature>
<feature type="domain" description="Obg" evidence="2">
    <location>
        <begin position="2"/>
        <end position="160"/>
    </location>
</feature>
<feature type="domain" description="OBG-type G" evidence="1">
    <location>
        <begin position="161"/>
        <end position="330"/>
    </location>
</feature>
<feature type="binding site" evidence="1">
    <location>
        <begin position="167"/>
        <end position="174"/>
    </location>
    <ligand>
        <name>GTP</name>
        <dbReference type="ChEBI" id="CHEBI:37565"/>
    </ligand>
</feature>
<feature type="binding site" evidence="1">
    <location>
        <position position="174"/>
    </location>
    <ligand>
        <name>Mg(2+)</name>
        <dbReference type="ChEBI" id="CHEBI:18420"/>
    </ligand>
</feature>
<feature type="binding site" evidence="1">
    <location>
        <begin position="192"/>
        <end position="196"/>
    </location>
    <ligand>
        <name>GTP</name>
        <dbReference type="ChEBI" id="CHEBI:37565"/>
    </ligand>
</feature>
<feature type="binding site" evidence="1">
    <location>
        <position position="194"/>
    </location>
    <ligand>
        <name>Mg(2+)</name>
        <dbReference type="ChEBI" id="CHEBI:18420"/>
    </ligand>
</feature>
<feature type="binding site" evidence="1">
    <location>
        <begin position="215"/>
        <end position="218"/>
    </location>
    <ligand>
        <name>GTP</name>
        <dbReference type="ChEBI" id="CHEBI:37565"/>
    </ligand>
</feature>
<feature type="binding site" evidence="1">
    <location>
        <begin position="282"/>
        <end position="285"/>
    </location>
    <ligand>
        <name>GTP</name>
        <dbReference type="ChEBI" id="CHEBI:37565"/>
    </ligand>
</feature>
<feature type="binding site" evidence="1">
    <location>
        <begin position="311"/>
        <end position="313"/>
    </location>
    <ligand>
        <name>GTP</name>
        <dbReference type="ChEBI" id="CHEBI:37565"/>
    </ligand>
</feature>
<keyword id="KW-0963">Cytoplasm</keyword>
<keyword id="KW-0342">GTP-binding</keyword>
<keyword id="KW-0378">Hydrolase</keyword>
<keyword id="KW-0460">Magnesium</keyword>
<keyword id="KW-0479">Metal-binding</keyword>
<keyword id="KW-0547">Nucleotide-binding</keyword>
<reference key="1">
    <citation type="journal article" date="2008" name="PLoS ONE">
        <title>Genome sequence of the saprophyte Leptospira biflexa provides insights into the evolution of Leptospira and the pathogenesis of leptospirosis.</title>
        <authorList>
            <person name="Picardeau M."/>
            <person name="Bulach D.M."/>
            <person name="Bouchier C."/>
            <person name="Zuerner R.L."/>
            <person name="Zidane N."/>
            <person name="Wilson P.J."/>
            <person name="Creno S."/>
            <person name="Kuczek E.S."/>
            <person name="Bommezzadri S."/>
            <person name="Davis J.C."/>
            <person name="McGrath A."/>
            <person name="Johnson M.J."/>
            <person name="Boursaux-Eude C."/>
            <person name="Seemann T."/>
            <person name="Rouy Z."/>
            <person name="Coppel R.L."/>
            <person name="Rood J.I."/>
            <person name="Lajus A."/>
            <person name="Davies J.K."/>
            <person name="Medigue C."/>
            <person name="Adler B."/>
        </authorList>
    </citation>
    <scope>NUCLEOTIDE SEQUENCE [LARGE SCALE GENOMIC DNA]</scope>
    <source>
        <strain>Patoc 1 / Ames</strain>
    </source>
</reference>
<accession>B0S9A3</accession>
<proteinExistence type="inferred from homology"/>
<sequence length="341" mass="37498">MSGFIDEVPIQIRAGHGGAGSVHFHKEKFVEFGGPDGGDGGKGGDVIFLAEGRMMTLENYLPDRMYAAQDGEPGLGQNRNGKNGEDLILKVPVGTQIIDSVTMELIYDFNHDGESFTIATGGRGGKGNTFFKTSVQQAPRYSQPGEEGGAFSLILELKLLADIGIVGLPNAGKSTLLAKITHAHPKIAGYAFTTLSPNLGVVHRHEDLFRYTVADIPGIIEGASRGVGLGISFLKHIERVQGILFLFDGGNLQLEEELEMLRSELGNYNQTLLDKKFLLVINKMDIWDNDPSFTEEIQKKYSHLGEIICISADKEFNLEYLLERIDKVFFTEKVKLVYENT</sequence>
<dbReference type="EC" id="3.6.5.-" evidence="1"/>
<dbReference type="EMBL" id="CP000777">
    <property type="protein sequence ID" value="ABZ94230.1"/>
    <property type="molecule type" value="Genomic_DNA"/>
</dbReference>
<dbReference type="RefSeq" id="WP_012388760.1">
    <property type="nucleotide sequence ID" value="NC_010842.1"/>
</dbReference>
<dbReference type="SMR" id="B0S9A3"/>
<dbReference type="KEGG" id="lbf:LBF_1723"/>
<dbReference type="HOGENOM" id="CLU_011747_2_0_12"/>
<dbReference type="GO" id="GO:0005737">
    <property type="term" value="C:cytoplasm"/>
    <property type="evidence" value="ECO:0007669"/>
    <property type="project" value="UniProtKB-SubCell"/>
</dbReference>
<dbReference type="GO" id="GO:0005525">
    <property type="term" value="F:GTP binding"/>
    <property type="evidence" value="ECO:0007669"/>
    <property type="project" value="UniProtKB-UniRule"/>
</dbReference>
<dbReference type="GO" id="GO:0003924">
    <property type="term" value="F:GTPase activity"/>
    <property type="evidence" value="ECO:0007669"/>
    <property type="project" value="UniProtKB-UniRule"/>
</dbReference>
<dbReference type="GO" id="GO:0000287">
    <property type="term" value="F:magnesium ion binding"/>
    <property type="evidence" value="ECO:0007669"/>
    <property type="project" value="InterPro"/>
</dbReference>
<dbReference type="GO" id="GO:0042254">
    <property type="term" value="P:ribosome biogenesis"/>
    <property type="evidence" value="ECO:0007669"/>
    <property type="project" value="UniProtKB-UniRule"/>
</dbReference>
<dbReference type="CDD" id="cd01898">
    <property type="entry name" value="Obg"/>
    <property type="match status" value="1"/>
</dbReference>
<dbReference type="FunFam" id="2.70.210.12:FF:000001">
    <property type="entry name" value="GTPase Obg"/>
    <property type="match status" value="1"/>
</dbReference>
<dbReference type="Gene3D" id="2.70.210.12">
    <property type="entry name" value="GTP1/OBG domain"/>
    <property type="match status" value="1"/>
</dbReference>
<dbReference type="Gene3D" id="3.40.50.300">
    <property type="entry name" value="P-loop containing nucleotide triphosphate hydrolases"/>
    <property type="match status" value="1"/>
</dbReference>
<dbReference type="HAMAP" id="MF_01454">
    <property type="entry name" value="GTPase_Obg"/>
    <property type="match status" value="1"/>
</dbReference>
<dbReference type="InterPro" id="IPR031167">
    <property type="entry name" value="G_OBG"/>
</dbReference>
<dbReference type="InterPro" id="IPR006073">
    <property type="entry name" value="GTP-bd"/>
</dbReference>
<dbReference type="InterPro" id="IPR014100">
    <property type="entry name" value="GTP-bd_Obg/CgtA"/>
</dbReference>
<dbReference type="InterPro" id="IPR006074">
    <property type="entry name" value="GTP1-OBG_CS"/>
</dbReference>
<dbReference type="InterPro" id="IPR006169">
    <property type="entry name" value="GTP1_OBG_dom"/>
</dbReference>
<dbReference type="InterPro" id="IPR036726">
    <property type="entry name" value="GTP1_OBG_dom_sf"/>
</dbReference>
<dbReference type="InterPro" id="IPR045086">
    <property type="entry name" value="OBG_GTPase"/>
</dbReference>
<dbReference type="InterPro" id="IPR027417">
    <property type="entry name" value="P-loop_NTPase"/>
</dbReference>
<dbReference type="NCBIfam" id="TIGR02729">
    <property type="entry name" value="Obg_CgtA"/>
    <property type="match status" value="1"/>
</dbReference>
<dbReference type="NCBIfam" id="NF008956">
    <property type="entry name" value="PRK12299.1"/>
    <property type="match status" value="1"/>
</dbReference>
<dbReference type="PANTHER" id="PTHR11702">
    <property type="entry name" value="DEVELOPMENTALLY REGULATED GTP-BINDING PROTEIN-RELATED"/>
    <property type="match status" value="1"/>
</dbReference>
<dbReference type="PANTHER" id="PTHR11702:SF31">
    <property type="entry name" value="MITOCHONDRIAL RIBOSOME-ASSOCIATED GTPASE 2"/>
    <property type="match status" value="1"/>
</dbReference>
<dbReference type="Pfam" id="PF01018">
    <property type="entry name" value="GTP1_OBG"/>
    <property type="match status" value="1"/>
</dbReference>
<dbReference type="Pfam" id="PF01926">
    <property type="entry name" value="MMR_HSR1"/>
    <property type="match status" value="1"/>
</dbReference>
<dbReference type="PIRSF" id="PIRSF002401">
    <property type="entry name" value="GTP_bd_Obg/CgtA"/>
    <property type="match status" value="1"/>
</dbReference>
<dbReference type="PRINTS" id="PR00326">
    <property type="entry name" value="GTP1OBG"/>
</dbReference>
<dbReference type="SUPFAM" id="SSF82051">
    <property type="entry name" value="Obg GTP-binding protein N-terminal domain"/>
    <property type="match status" value="1"/>
</dbReference>
<dbReference type="SUPFAM" id="SSF52540">
    <property type="entry name" value="P-loop containing nucleoside triphosphate hydrolases"/>
    <property type="match status" value="1"/>
</dbReference>
<dbReference type="PROSITE" id="PS51710">
    <property type="entry name" value="G_OBG"/>
    <property type="match status" value="1"/>
</dbReference>
<dbReference type="PROSITE" id="PS00905">
    <property type="entry name" value="GTP1_OBG"/>
    <property type="match status" value="1"/>
</dbReference>
<dbReference type="PROSITE" id="PS51883">
    <property type="entry name" value="OBG"/>
    <property type="match status" value="1"/>
</dbReference>
<name>OBG_LEPBA</name>
<protein>
    <recommendedName>
        <fullName evidence="1">GTPase Obg</fullName>
        <ecNumber evidence="1">3.6.5.-</ecNumber>
    </recommendedName>
    <alternativeName>
        <fullName evidence="1">GTP-binding protein Obg</fullName>
    </alternativeName>
</protein>
<evidence type="ECO:0000255" key="1">
    <source>
        <dbReference type="HAMAP-Rule" id="MF_01454"/>
    </source>
</evidence>
<evidence type="ECO:0000255" key="2">
    <source>
        <dbReference type="PROSITE-ProRule" id="PRU01231"/>
    </source>
</evidence>